<keyword id="KW-0328">Glycosyltransferase</keyword>
<keyword id="KW-0460">Magnesium</keyword>
<keyword id="KW-0665">Pyrimidine biosynthesis</keyword>
<keyword id="KW-1185">Reference proteome</keyword>
<keyword id="KW-0808">Transferase</keyword>
<organism>
    <name type="scientific">Shigella flexneri</name>
    <dbReference type="NCBI Taxonomy" id="623"/>
    <lineage>
        <taxon>Bacteria</taxon>
        <taxon>Pseudomonadati</taxon>
        <taxon>Pseudomonadota</taxon>
        <taxon>Gammaproteobacteria</taxon>
        <taxon>Enterobacterales</taxon>
        <taxon>Enterobacteriaceae</taxon>
        <taxon>Shigella</taxon>
    </lineage>
</organism>
<evidence type="ECO:0000255" key="1">
    <source>
        <dbReference type="HAMAP-Rule" id="MF_01208"/>
    </source>
</evidence>
<proteinExistence type="inferred from homology"/>
<comment type="function">
    <text evidence="1">Catalyzes the transfer of a ribosyl phosphate group from 5-phosphoribose 1-diphosphate to orotate, leading to the formation of orotidine monophosphate (OMP).</text>
</comment>
<comment type="catalytic activity">
    <reaction evidence="1">
        <text>orotidine 5'-phosphate + diphosphate = orotate + 5-phospho-alpha-D-ribose 1-diphosphate</text>
        <dbReference type="Rhea" id="RHEA:10380"/>
        <dbReference type="ChEBI" id="CHEBI:30839"/>
        <dbReference type="ChEBI" id="CHEBI:33019"/>
        <dbReference type="ChEBI" id="CHEBI:57538"/>
        <dbReference type="ChEBI" id="CHEBI:58017"/>
        <dbReference type="EC" id="2.4.2.10"/>
    </reaction>
</comment>
<comment type="cofactor">
    <cofactor evidence="1">
        <name>Mg(2+)</name>
        <dbReference type="ChEBI" id="CHEBI:18420"/>
    </cofactor>
</comment>
<comment type="pathway">
    <text evidence="1">Pyrimidine metabolism; UMP biosynthesis via de novo pathway; UMP from orotate: step 1/2.</text>
</comment>
<comment type="subunit">
    <text evidence="1">Homodimer.</text>
</comment>
<comment type="similarity">
    <text evidence="1">Belongs to the purine/pyrimidine phosphoribosyltransferase family. PyrE subfamily.</text>
</comment>
<feature type="chain" id="PRO_1000066298" description="Orotate phosphoribosyltransferase">
    <location>
        <begin position="1"/>
        <end position="213"/>
    </location>
</feature>
<feature type="binding site" description="in other chain" evidence="1">
    <location>
        <position position="26"/>
    </location>
    <ligand>
        <name>5-phospho-alpha-D-ribose 1-diphosphate</name>
        <dbReference type="ChEBI" id="CHEBI:58017"/>
        <note>ligand shared between dimeric partners</note>
    </ligand>
</feature>
<feature type="binding site" evidence="1">
    <location>
        <begin position="34"/>
        <end position="35"/>
    </location>
    <ligand>
        <name>orotate</name>
        <dbReference type="ChEBI" id="CHEBI:30839"/>
    </ligand>
</feature>
<feature type="binding site" description="in other chain" evidence="1">
    <location>
        <begin position="72"/>
        <end position="73"/>
    </location>
    <ligand>
        <name>5-phospho-alpha-D-ribose 1-diphosphate</name>
        <dbReference type="ChEBI" id="CHEBI:58017"/>
        <note>ligand shared between dimeric partners</note>
    </ligand>
</feature>
<feature type="binding site" evidence="1">
    <location>
        <position position="99"/>
    </location>
    <ligand>
        <name>5-phospho-alpha-D-ribose 1-diphosphate</name>
        <dbReference type="ChEBI" id="CHEBI:58017"/>
        <note>ligand shared between dimeric partners</note>
    </ligand>
</feature>
<feature type="binding site" description="in other chain" evidence="1">
    <location>
        <position position="100"/>
    </location>
    <ligand>
        <name>5-phospho-alpha-D-ribose 1-diphosphate</name>
        <dbReference type="ChEBI" id="CHEBI:58017"/>
        <note>ligand shared between dimeric partners</note>
    </ligand>
</feature>
<feature type="binding site" evidence="1">
    <location>
        <position position="103"/>
    </location>
    <ligand>
        <name>5-phospho-alpha-D-ribose 1-diphosphate</name>
        <dbReference type="ChEBI" id="CHEBI:58017"/>
        <note>ligand shared between dimeric partners</note>
    </ligand>
</feature>
<feature type="binding site" evidence="1">
    <location>
        <position position="105"/>
    </location>
    <ligand>
        <name>5-phospho-alpha-D-ribose 1-diphosphate</name>
        <dbReference type="ChEBI" id="CHEBI:58017"/>
        <note>ligand shared between dimeric partners</note>
    </ligand>
</feature>
<feature type="binding site" description="in other chain" evidence="1">
    <location>
        <begin position="124"/>
        <end position="132"/>
    </location>
    <ligand>
        <name>5-phospho-alpha-D-ribose 1-diphosphate</name>
        <dbReference type="ChEBI" id="CHEBI:58017"/>
        <note>ligand shared between dimeric partners</note>
    </ligand>
</feature>
<feature type="binding site" evidence="1">
    <location>
        <position position="128"/>
    </location>
    <ligand>
        <name>orotate</name>
        <dbReference type="ChEBI" id="CHEBI:30839"/>
    </ligand>
</feature>
<feature type="binding site" evidence="1">
    <location>
        <position position="156"/>
    </location>
    <ligand>
        <name>orotate</name>
        <dbReference type="ChEBI" id="CHEBI:30839"/>
    </ligand>
</feature>
<reference key="1">
    <citation type="journal article" date="2002" name="Nucleic Acids Res.">
        <title>Genome sequence of Shigella flexneri 2a: insights into pathogenicity through comparison with genomes of Escherichia coli K12 and O157.</title>
        <authorList>
            <person name="Jin Q."/>
            <person name="Yuan Z."/>
            <person name="Xu J."/>
            <person name="Wang Y."/>
            <person name="Shen Y."/>
            <person name="Lu W."/>
            <person name="Wang J."/>
            <person name="Liu H."/>
            <person name="Yang J."/>
            <person name="Yang F."/>
            <person name="Zhang X."/>
            <person name="Zhang J."/>
            <person name="Yang G."/>
            <person name="Wu H."/>
            <person name="Qu D."/>
            <person name="Dong J."/>
            <person name="Sun L."/>
            <person name="Xue Y."/>
            <person name="Zhao A."/>
            <person name="Gao Y."/>
            <person name="Zhu J."/>
            <person name="Kan B."/>
            <person name="Ding K."/>
            <person name="Chen S."/>
            <person name="Cheng H."/>
            <person name="Yao Z."/>
            <person name="He B."/>
            <person name="Chen R."/>
            <person name="Ma D."/>
            <person name="Qiang B."/>
            <person name="Wen Y."/>
            <person name="Hou Y."/>
            <person name="Yu J."/>
        </authorList>
    </citation>
    <scope>NUCLEOTIDE SEQUENCE [LARGE SCALE GENOMIC DNA]</scope>
    <source>
        <strain>301 / Serotype 2a</strain>
    </source>
</reference>
<reference key="2">
    <citation type="journal article" date="2003" name="Infect. Immun.">
        <title>Complete genome sequence and comparative genomics of Shigella flexneri serotype 2a strain 2457T.</title>
        <authorList>
            <person name="Wei J."/>
            <person name="Goldberg M.B."/>
            <person name="Burland V."/>
            <person name="Venkatesan M.M."/>
            <person name="Deng W."/>
            <person name="Fournier G."/>
            <person name="Mayhew G.F."/>
            <person name="Plunkett G. III"/>
            <person name="Rose D.J."/>
            <person name="Darling A."/>
            <person name="Mau B."/>
            <person name="Perna N.T."/>
            <person name="Payne S.M."/>
            <person name="Runyen-Janecky L.J."/>
            <person name="Zhou S."/>
            <person name="Schwartz D.C."/>
            <person name="Blattner F.R."/>
        </authorList>
    </citation>
    <scope>NUCLEOTIDE SEQUENCE [LARGE SCALE GENOMIC DNA]</scope>
    <source>
        <strain>ATCC 700930 / 2457T / Serotype 2a</strain>
    </source>
</reference>
<gene>
    <name evidence="1" type="primary">pyrE</name>
    <name type="ordered locus">SF3681</name>
    <name type="ordered locus">S4087</name>
</gene>
<dbReference type="EC" id="2.4.2.10" evidence="1"/>
<dbReference type="EMBL" id="AE005674">
    <property type="protein sequence ID" value="AAN45128.2"/>
    <property type="molecule type" value="Genomic_DNA"/>
</dbReference>
<dbReference type="EMBL" id="AE014073">
    <property type="protein sequence ID" value="AAP19064.1"/>
    <property type="molecule type" value="Genomic_DNA"/>
</dbReference>
<dbReference type="RefSeq" id="NP_709421.2">
    <property type="nucleotide sequence ID" value="NC_004337.2"/>
</dbReference>
<dbReference type="RefSeq" id="WP_000844529.1">
    <property type="nucleotide sequence ID" value="NZ_WPGW01000042.1"/>
</dbReference>
<dbReference type="SMR" id="Q83J15"/>
<dbReference type="STRING" id="198214.SF3681"/>
<dbReference type="PaxDb" id="198214-SF3681"/>
<dbReference type="GeneID" id="1026234"/>
<dbReference type="KEGG" id="sfl:SF3681"/>
<dbReference type="KEGG" id="sfx:S4087"/>
<dbReference type="PATRIC" id="fig|198214.7.peg.4344"/>
<dbReference type="HOGENOM" id="CLU_074878_0_1_6"/>
<dbReference type="UniPathway" id="UPA00070">
    <property type="reaction ID" value="UER00119"/>
</dbReference>
<dbReference type="Proteomes" id="UP000001006">
    <property type="component" value="Chromosome"/>
</dbReference>
<dbReference type="Proteomes" id="UP000002673">
    <property type="component" value="Chromosome"/>
</dbReference>
<dbReference type="GO" id="GO:0005737">
    <property type="term" value="C:cytoplasm"/>
    <property type="evidence" value="ECO:0007669"/>
    <property type="project" value="TreeGrafter"/>
</dbReference>
<dbReference type="GO" id="GO:0000287">
    <property type="term" value="F:magnesium ion binding"/>
    <property type="evidence" value="ECO:0007669"/>
    <property type="project" value="UniProtKB-UniRule"/>
</dbReference>
<dbReference type="GO" id="GO:0004588">
    <property type="term" value="F:orotate phosphoribosyltransferase activity"/>
    <property type="evidence" value="ECO:0007669"/>
    <property type="project" value="UniProtKB-UniRule"/>
</dbReference>
<dbReference type="GO" id="GO:0006207">
    <property type="term" value="P:'de novo' pyrimidine nucleobase biosynthetic process"/>
    <property type="evidence" value="ECO:0007669"/>
    <property type="project" value="TreeGrafter"/>
</dbReference>
<dbReference type="GO" id="GO:0044205">
    <property type="term" value="P:'de novo' UMP biosynthetic process"/>
    <property type="evidence" value="ECO:0007669"/>
    <property type="project" value="UniProtKB-UniRule"/>
</dbReference>
<dbReference type="GO" id="GO:0046132">
    <property type="term" value="P:pyrimidine ribonucleoside biosynthetic process"/>
    <property type="evidence" value="ECO:0007669"/>
    <property type="project" value="TreeGrafter"/>
</dbReference>
<dbReference type="CDD" id="cd06223">
    <property type="entry name" value="PRTases_typeI"/>
    <property type="match status" value="1"/>
</dbReference>
<dbReference type="FunFam" id="3.40.50.2020:FF:000008">
    <property type="entry name" value="Orotate phosphoribosyltransferase"/>
    <property type="match status" value="1"/>
</dbReference>
<dbReference type="Gene3D" id="3.40.50.2020">
    <property type="match status" value="1"/>
</dbReference>
<dbReference type="HAMAP" id="MF_01208">
    <property type="entry name" value="PyrE"/>
    <property type="match status" value="1"/>
</dbReference>
<dbReference type="InterPro" id="IPR023031">
    <property type="entry name" value="OPRT"/>
</dbReference>
<dbReference type="InterPro" id="IPR004467">
    <property type="entry name" value="Or_phspho_trans_dom"/>
</dbReference>
<dbReference type="InterPro" id="IPR000836">
    <property type="entry name" value="PRibTrfase_dom"/>
</dbReference>
<dbReference type="InterPro" id="IPR029057">
    <property type="entry name" value="PRTase-like"/>
</dbReference>
<dbReference type="NCBIfam" id="TIGR00336">
    <property type="entry name" value="pyrE"/>
    <property type="match status" value="1"/>
</dbReference>
<dbReference type="PANTHER" id="PTHR46683">
    <property type="entry name" value="OROTATE PHOSPHORIBOSYLTRANSFERASE 1-RELATED"/>
    <property type="match status" value="1"/>
</dbReference>
<dbReference type="PANTHER" id="PTHR46683:SF1">
    <property type="entry name" value="OROTATE PHOSPHORIBOSYLTRANSFERASE 1-RELATED"/>
    <property type="match status" value="1"/>
</dbReference>
<dbReference type="Pfam" id="PF00156">
    <property type="entry name" value="Pribosyltran"/>
    <property type="match status" value="1"/>
</dbReference>
<dbReference type="SUPFAM" id="SSF53271">
    <property type="entry name" value="PRTase-like"/>
    <property type="match status" value="1"/>
</dbReference>
<dbReference type="PROSITE" id="PS00103">
    <property type="entry name" value="PUR_PYR_PR_TRANSFER"/>
    <property type="match status" value="1"/>
</dbReference>
<sequence>MKSYQRQFIEFALSKQVLKFGEFTLKSGRKSPYFFNAGLFNTGRDLALLGRFYAEALVDSGIEFDLLFGPAYKGIPIATTTAVALAEHHDLDLPYCFNRKEAKDHGEGGNLVGSALQGRVMLVDDVITAGTAIRESMEIIQANGATLAGVLISLDRQERGRGEISAIQEVERDYNCKVISIITLKDLIAYLEEKPEMAEHLAAVKAYREEFGV</sequence>
<protein>
    <recommendedName>
        <fullName evidence="1">Orotate phosphoribosyltransferase</fullName>
        <shortName evidence="1">OPRT</shortName>
        <shortName evidence="1">OPRTase</shortName>
        <ecNumber evidence="1">2.4.2.10</ecNumber>
    </recommendedName>
</protein>
<accession>Q83J15</accession>
<accession>Q7UAZ8</accession>
<name>PYRE_SHIFL</name>